<reference key="1">
    <citation type="journal article" date="2000" name="Nature">
        <title>Genome sequence of the endocellular bacterial symbiont of aphids Buchnera sp. APS.</title>
        <authorList>
            <person name="Shigenobu S."/>
            <person name="Watanabe H."/>
            <person name="Hattori M."/>
            <person name="Sakaki Y."/>
            <person name="Ishikawa H."/>
        </authorList>
    </citation>
    <scope>NUCLEOTIDE SEQUENCE [LARGE SCALE GENOMIC DNA]</scope>
    <source>
        <strain>APS</strain>
    </source>
</reference>
<keyword id="KW-0067">ATP-binding</keyword>
<keyword id="KW-0963">Cytoplasm</keyword>
<keyword id="KW-0324">Glycolysis</keyword>
<keyword id="KW-0418">Kinase</keyword>
<keyword id="KW-0547">Nucleotide-binding</keyword>
<keyword id="KW-1185">Reference proteome</keyword>
<keyword id="KW-0808">Transferase</keyword>
<gene>
    <name type="primary">pgk</name>
    <name type="ordered locus">BU450</name>
</gene>
<sequence length="390" mass="43653">MTIRKMTELNITEKRILIRSDLNVPIENGIIQSDARILAALPTIELALQKKAKVIIMSHLGRPKEGYYTKKYSLFPIFEYFKKKFNNTKIYFSNNFLDGIKLNPGEIALLENTRFNKGELNNDEQLSKKYSDLCDIFVMDAFGSAHRMQSSTYGIGKFVKIACAGLLLISEIDALKKALKKPKRPMVAIVGGSKVSTKFNVLNKLSKIADTIIVGGGIANTFLAIDYKIGKSLYEPDFVFEAKKLRDKYNIIVPIDSRVGKNFCKNEQAIIKSPDNIKEDEEIMDFGDESIKKIISIITQSQTIMWNGPVGVFEFPNFRKGTEMIAKTIANSNAFSIAGGGDTLSVIDMFNIKNNISYISTGGGAFLEFIEGKKLPAIQMLEENFKNKSK</sequence>
<feature type="chain" id="PRO_0000145918" description="Phosphoglycerate kinase">
    <location>
        <begin position="1"/>
        <end position="390"/>
    </location>
</feature>
<feature type="binding site" evidence="1">
    <location>
        <begin position="21"/>
        <end position="23"/>
    </location>
    <ligand>
        <name>substrate</name>
    </ligand>
</feature>
<feature type="binding site" evidence="1">
    <location>
        <position position="36"/>
    </location>
    <ligand>
        <name>substrate</name>
    </ligand>
</feature>
<feature type="binding site" evidence="1">
    <location>
        <begin position="59"/>
        <end position="62"/>
    </location>
    <ligand>
        <name>substrate</name>
    </ligand>
</feature>
<feature type="binding site" evidence="1">
    <location>
        <position position="114"/>
    </location>
    <ligand>
        <name>substrate</name>
    </ligand>
</feature>
<feature type="binding site" evidence="1">
    <location>
        <position position="147"/>
    </location>
    <ligand>
        <name>substrate</name>
    </ligand>
</feature>
<feature type="binding site" evidence="1">
    <location>
        <position position="198"/>
    </location>
    <ligand>
        <name>ATP</name>
        <dbReference type="ChEBI" id="CHEBI:30616"/>
    </ligand>
</feature>
<feature type="binding site" evidence="1">
    <location>
        <position position="314"/>
    </location>
    <ligand>
        <name>ATP</name>
        <dbReference type="ChEBI" id="CHEBI:30616"/>
    </ligand>
</feature>
<feature type="binding site" evidence="1">
    <location>
        <begin position="340"/>
        <end position="343"/>
    </location>
    <ligand>
        <name>ATP</name>
        <dbReference type="ChEBI" id="CHEBI:30616"/>
    </ligand>
</feature>
<name>PGK_BUCAI</name>
<protein>
    <recommendedName>
        <fullName>Phosphoglycerate kinase</fullName>
        <ecNumber>2.7.2.3</ecNumber>
    </recommendedName>
</protein>
<evidence type="ECO:0000250" key="1"/>
<evidence type="ECO:0000305" key="2"/>
<accession>P57525</accession>
<organism>
    <name type="scientific">Buchnera aphidicola subsp. Acyrthosiphon pisum (strain APS)</name>
    <name type="common">Acyrthosiphon pisum symbiotic bacterium</name>
    <dbReference type="NCBI Taxonomy" id="107806"/>
    <lineage>
        <taxon>Bacteria</taxon>
        <taxon>Pseudomonadati</taxon>
        <taxon>Pseudomonadota</taxon>
        <taxon>Gammaproteobacteria</taxon>
        <taxon>Enterobacterales</taxon>
        <taxon>Erwiniaceae</taxon>
        <taxon>Buchnera</taxon>
    </lineage>
</organism>
<dbReference type="EC" id="2.7.2.3"/>
<dbReference type="EMBL" id="BA000003">
    <property type="protein sequence ID" value="BAB13148.1"/>
    <property type="molecule type" value="Genomic_DNA"/>
</dbReference>
<dbReference type="RefSeq" id="NP_240262.1">
    <property type="nucleotide sequence ID" value="NC_002528.1"/>
</dbReference>
<dbReference type="RefSeq" id="WP_010896123.1">
    <property type="nucleotide sequence ID" value="NZ_AP036055.1"/>
</dbReference>
<dbReference type="SMR" id="P57525"/>
<dbReference type="STRING" id="563178.BUAP5A_443"/>
<dbReference type="EnsemblBacteria" id="BAB13148">
    <property type="protein sequence ID" value="BAB13148"/>
    <property type="gene ID" value="BAB13148"/>
</dbReference>
<dbReference type="KEGG" id="buc:BU450"/>
<dbReference type="PATRIC" id="fig|107806.10.peg.460"/>
<dbReference type="eggNOG" id="COG0126">
    <property type="taxonomic scope" value="Bacteria"/>
</dbReference>
<dbReference type="HOGENOM" id="CLU_025427_0_2_6"/>
<dbReference type="UniPathway" id="UPA00109">
    <property type="reaction ID" value="UER00185"/>
</dbReference>
<dbReference type="Proteomes" id="UP000001806">
    <property type="component" value="Chromosome"/>
</dbReference>
<dbReference type="GO" id="GO:0005829">
    <property type="term" value="C:cytosol"/>
    <property type="evidence" value="ECO:0007669"/>
    <property type="project" value="TreeGrafter"/>
</dbReference>
<dbReference type="GO" id="GO:0043531">
    <property type="term" value="F:ADP binding"/>
    <property type="evidence" value="ECO:0007669"/>
    <property type="project" value="TreeGrafter"/>
</dbReference>
<dbReference type="GO" id="GO:0005524">
    <property type="term" value="F:ATP binding"/>
    <property type="evidence" value="ECO:0007669"/>
    <property type="project" value="UniProtKB-KW"/>
</dbReference>
<dbReference type="GO" id="GO:0004618">
    <property type="term" value="F:phosphoglycerate kinase activity"/>
    <property type="evidence" value="ECO:0007669"/>
    <property type="project" value="UniProtKB-UniRule"/>
</dbReference>
<dbReference type="GO" id="GO:0006094">
    <property type="term" value="P:gluconeogenesis"/>
    <property type="evidence" value="ECO:0007669"/>
    <property type="project" value="TreeGrafter"/>
</dbReference>
<dbReference type="GO" id="GO:0006096">
    <property type="term" value="P:glycolytic process"/>
    <property type="evidence" value="ECO:0007669"/>
    <property type="project" value="UniProtKB-UniRule"/>
</dbReference>
<dbReference type="FunFam" id="3.40.50.1260:FF:000002">
    <property type="entry name" value="Phosphoglycerate kinase"/>
    <property type="match status" value="1"/>
</dbReference>
<dbReference type="FunFam" id="3.40.50.1260:FF:000031">
    <property type="entry name" value="Phosphoglycerate kinase 1"/>
    <property type="match status" value="1"/>
</dbReference>
<dbReference type="Gene3D" id="3.40.50.1260">
    <property type="entry name" value="Phosphoglycerate kinase, N-terminal domain"/>
    <property type="match status" value="2"/>
</dbReference>
<dbReference type="HAMAP" id="MF_00145">
    <property type="entry name" value="Phosphoglyc_kinase"/>
    <property type="match status" value="1"/>
</dbReference>
<dbReference type="InterPro" id="IPR001576">
    <property type="entry name" value="Phosphoglycerate_kinase"/>
</dbReference>
<dbReference type="InterPro" id="IPR015824">
    <property type="entry name" value="Phosphoglycerate_kinase_N"/>
</dbReference>
<dbReference type="InterPro" id="IPR036043">
    <property type="entry name" value="Phosphoglycerate_kinase_sf"/>
</dbReference>
<dbReference type="PANTHER" id="PTHR11406">
    <property type="entry name" value="PHOSPHOGLYCERATE KINASE"/>
    <property type="match status" value="1"/>
</dbReference>
<dbReference type="PANTHER" id="PTHR11406:SF23">
    <property type="entry name" value="PHOSPHOGLYCERATE KINASE 1, CHLOROPLASTIC-RELATED"/>
    <property type="match status" value="1"/>
</dbReference>
<dbReference type="Pfam" id="PF00162">
    <property type="entry name" value="PGK"/>
    <property type="match status" value="1"/>
</dbReference>
<dbReference type="PIRSF" id="PIRSF000724">
    <property type="entry name" value="Pgk"/>
    <property type="match status" value="1"/>
</dbReference>
<dbReference type="PRINTS" id="PR00477">
    <property type="entry name" value="PHGLYCKINASE"/>
</dbReference>
<dbReference type="SUPFAM" id="SSF53748">
    <property type="entry name" value="Phosphoglycerate kinase"/>
    <property type="match status" value="1"/>
</dbReference>
<proteinExistence type="inferred from homology"/>
<comment type="catalytic activity">
    <reaction>
        <text>(2R)-3-phosphoglycerate + ATP = (2R)-3-phospho-glyceroyl phosphate + ADP</text>
        <dbReference type="Rhea" id="RHEA:14801"/>
        <dbReference type="ChEBI" id="CHEBI:30616"/>
        <dbReference type="ChEBI" id="CHEBI:57604"/>
        <dbReference type="ChEBI" id="CHEBI:58272"/>
        <dbReference type="ChEBI" id="CHEBI:456216"/>
        <dbReference type="EC" id="2.7.2.3"/>
    </reaction>
</comment>
<comment type="pathway">
    <text>Carbohydrate degradation; glycolysis; pyruvate from D-glyceraldehyde 3-phosphate: step 2/5.</text>
</comment>
<comment type="subunit">
    <text evidence="1">Monomer.</text>
</comment>
<comment type="subcellular location">
    <subcellularLocation>
        <location evidence="2">Cytoplasm</location>
    </subcellularLocation>
</comment>
<comment type="similarity">
    <text evidence="2">Belongs to the phosphoglycerate kinase family.</text>
</comment>